<keyword id="KW-0472">Membrane</keyword>
<keyword id="KW-1185">Reference proteome</keyword>
<keyword id="KW-0812">Transmembrane</keyword>
<keyword id="KW-1133">Transmembrane helix</keyword>
<organism>
    <name type="scientific">Saccharomyces cerevisiae (strain ATCC 204508 / S288c)</name>
    <name type="common">Baker's yeast</name>
    <dbReference type="NCBI Taxonomy" id="559292"/>
    <lineage>
        <taxon>Eukaryota</taxon>
        <taxon>Fungi</taxon>
        <taxon>Dikarya</taxon>
        <taxon>Ascomycota</taxon>
        <taxon>Saccharomycotina</taxon>
        <taxon>Saccharomycetes</taxon>
        <taxon>Saccharomycetales</taxon>
        <taxon>Saccharomycetaceae</taxon>
        <taxon>Saccharomyces</taxon>
    </lineage>
</organism>
<reference key="1">
    <citation type="journal article" date="1997" name="Nature">
        <title>The nucleotide sequence of Saccharomyces cerevisiae chromosome XII.</title>
        <authorList>
            <person name="Johnston M."/>
            <person name="Hillier L.W."/>
            <person name="Riles L."/>
            <person name="Albermann K."/>
            <person name="Andre B."/>
            <person name="Ansorge W."/>
            <person name="Benes V."/>
            <person name="Brueckner M."/>
            <person name="Delius H."/>
            <person name="Dubois E."/>
            <person name="Duesterhoeft A."/>
            <person name="Entian K.-D."/>
            <person name="Floeth M."/>
            <person name="Goffeau A."/>
            <person name="Hebling U."/>
            <person name="Heumann K."/>
            <person name="Heuss-Neitzel D."/>
            <person name="Hilbert H."/>
            <person name="Hilger F."/>
            <person name="Kleine K."/>
            <person name="Koetter P."/>
            <person name="Louis E.J."/>
            <person name="Messenguy F."/>
            <person name="Mewes H.-W."/>
            <person name="Miosga T."/>
            <person name="Moestl D."/>
            <person name="Mueller-Auer S."/>
            <person name="Nentwich U."/>
            <person name="Obermaier B."/>
            <person name="Piravandi E."/>
            <person name="Pohl T.M."/>
            <person name="Portetelle D."/>
            <person name="Purnelle B."/>
            <person name="Rechmann S."/>
            <person name="Rieger M."/>
            <person name="Rinke M."/>
            <person name="Rose M."/>
            <person name="Scharfe M."/>
            <person name="Scherens B."/>
            <person name="Scholler P."/>
            <person name="Schwager C."/>
            <person name="Schwarz S."/>
            <person name="Underwood A.P."/>
            <person name="Urrestarazu L.A."/>
            <person name="Vandenbol M."/>
            <person name="Verhasselt P."/>
            <person name="Vierendeels F."/>
            <person name="Voet M."/>
            <person name="Volckaert G."/>
            <person name="Voss H."/>
            <person name="Wambutt R."/>
            <person name="Wedler E."/>
            <person name="Wedler H."/>
            <person name="Zimmermann F.K."/>
            <person name="Zollner A."/>
            <person name="Hani J."/>
            <person name="Hoheisel J.D."/>
        </authorList>
    </citation>
    <scope>NUCLEOTIDE SEQUENCE [LARGE SCALE GENOMIC DNA]</scope>
    <source>
        <strain>ATCC 204508 / S288c</strain>
    </source>
</reference>
<reference key="2">
    <citation type="journal article" date="2014" name="G3 (Bethesda)">
        <title>The reference genome sequence of Saccharomyces cerevisiae: Then and now.</title>
        <authorList>
            <person name="Engel S.R."/>
            <person name="Dietrich F.S."/>
            <person name="Fisk D.G."/>
            <person name="Binkley G."/>
            <person name="Balakrishnan R."/>
            <person name="Costanzo M.C."/>
            <person name="Dwight S.S."/>
            <person name="Hitz B.C."/>
            <person name="Karra K."/>
            <person name="Nash R.S."/>
            <person name="Weng S."/>
            <person name="Wong E.D."/>
            <person name="Lloyd P."/>
            <person name="Skrzypek M.S."/>
            <person name="Miyasato S.R."/>
            <person name="Simison M."/>
            <person name="Cherry J.M."/>
        </authorList>
    </citation>
    <scope>GENOME REANNOTATION</scope>
    <source>
        <strain>ATCC 204508 / S288c</strain>
    </source>
</reference>
<feature type="chain" id="PRO_0000299635" description="Uncharacterized protein YLR302C">
    <location>
        <begin position="1"/>
        <end position="120"/>
    </location>
</feature>
<feature type="transmembrane region" description="Helical" evidence="1">
    <location>
        <begin position="40"/>
        <end position="62"/>
    </location>
</feature>
<gene>
    <name type="ordered locus">YLR302C</name>
</gene>
<name>YL302_YEAST</name>
<accession>O13544</accession>
<accession>A0A1S0T0A9</accession>
<evidence type="ECO:0000255" key="1"/>
<evidence type="ECO:0000305" key="2"/>
<comment type="subcellular location">
    <subcellularLocation>
        <location evidence="2">Membrane</location>
        <topology evidence="2">Single-pass membrane protein</topology>
    </subcellularLocation>
</comment>
<protein>
    <recommendedName>
        <fullName>Uncharacterized protein YLR302C</fullName>
    </recommendedName>
</protein>
<proteinExistence type="predicted"/>
<dbReference type="EMBL" id="U17243">
    <property type="protein sequence ID" value="AAB67353.1"/>
    <property type="molecule type" value="Genomic_DNA"/>
</dbReference>
<dbReference type="EMBL" id="BK006945">
    <property type="protein sequence ID" value="DAA80320.1"/>
    <property type="molecule type" value="Genomic_DNA"/>
</dbReference>
<dbReference type="PIR" id="S69308">
    <property type="entry name" value="S69308"/>
</dbReference>
<dbReference type="RefSeq" id="NP_001335800.1">
    <property type="nucleotide sequence ID" value="NM_001348860.1"/>
</dbReference>
<dbReference type="FunCoup" id="O13544">
    <property type="interactions" value="51"/>
</dbReference>
<dbReference type="STRING" id="4932.YLR302C"/>
<dbReference type="PaxDb" id="4932-YLR302C"/>
<dbReference type="EnsemblFungi" id="YLR302C_mRNA">
    <property type="protein sequence ID" value="YLR302C"/>
    <property type="gene ID" value="YLR302C"/>
</dbReference>
<dbReference type="GeneID" id="851011"/>
<dbReference type="AGR" id="SGD:S000004293"/>
<dbReference type="SGD" id="S000004293">
    <property type="gene designation" value="YLR302C"/>
</dbReference>
<dbReference type="HOGENOM" id="CLU_2122979_0_0_1"/>
<dbReference type="InParanoid" id="O13544"/>
<dbReference type="OMA" id="FNWTRCH"/>
<dbReference type="ChiTaRS" id="YLR302C">
    <property type="organism name" value="yeast"/>
</dbReference>
<dbReference type="PRO" id="PR:O13544"/>
<dbReference type="Proteomes" id="UP000002311">
    <property type="component" value="Chromosome XII"/>
</dbReference>
<dbReference type="RNAct" id="O13544">
    <property type="molecule type" value="protein"/>
</dbReference>
<dbReference type="GO" id="GO:0016020">
    <property type="term" value="C:membrane"/>
    <property type="evidence" value="ECO:0007669"/>
    <property type="project" value="UniProtKB-SubCell"/>
</dbReference>
<sequence>MRWHCMDGGNRIVSMYLTTLYYTKEIVDEKTREQEKGKTSFLTDALLNLIYILFFSSSVFNWTRCHLFDTSVIMLHSFHEDGALTNLISHLPTTTVPQYRQLHVPFAILRSCDLKRKSKK</sequence>